<proteinExistence type="inferred from homology"/>
<comment type="function">
    <text evidence="1">Specifically methylates the uridine in position 2552 of 23S rRNA at the 2'-O position of the ribose in the fully assembled 50S ribosomal subunit.</text>
</comment>
<comment type="catalytic activity">
    <reaction evidence="1">
        <text>uridine(2552) in 23S rRNA + S-adenosyl-L-methionine = 2'-O-methyluridine(2552) in 23S rRNA + S-adenosyl-L-homocysteine + H(+)</text>
        <dbReference type="Rhea" id="RHEA:42720"/>
        <dbReference type="Rhea" id="RHEA-COMP:10202"/>
        <dbReference type="Rhea" id="RHEA-COMP:10203"/>
        <dbReference type="ChEBI" id="CHEBI:15378"/>
        <dbReference type="ChEBI" id="CHEBI:57856"/>
        <dbReference type="ChEBI" id="CHEBI:59789"/>
        <dbReference type="ChEBI" id="CHEBI:65315"/>
        <dbReference type="ChEBI" id="CHEBI:74478"/>
        <dbReference type="EC" id="2.1.1.166"/>
    </reaction>
</comment>
<comment type="subcellular location">
    <subcellularLocation>
        <location evidence="1">Cytoplasm</location>
    </subcellularLocation>
</comment>
<comment type="similarity">
    <text evidence="1">Belongs to the class I-like SAM-binding methyltransferase superfamily. RNA methyltransferase RlmE family.</text>
</comment>
<sequence length="259" mass="28151">MGNRKDHYYNKSKQEGYRSRAAYKLQQLDDRFDVLFGGASVVDLGAAPGGWLQVAAERAGARGKVVGVDFQSITQFETDAGLETVRGDMTEDETRQRVRDAANGSADVVVSDMAPDMTGEYDLDHARSVHLARQALETARELLDAGGHFVVKVFDGRDFQDLLADIEDEFAFVATHSPDASRDASSELYVVGKNHIVAPIAEGDEHTVEIVDTGDEGDGIARIEGYTLFVDDAAEGDTVDVTVTDLKPNYGFAERRDGA</sequence>
<name>RLME_HALS3</name>
<dbReference type="EC" id="2.1.1.166" evidence="1"/>
<dbReference type="EMBL" id="AM774415">
    <property type="protein sequence ID" value="CAP14682.1"/>
    <property type="molecule type" value="Genomic_DNA"/>
</dbReference>
<dbReference type="RefSeq" id="WP_010903682.1">
    <property type="nucleotide sequence ID" value="NC_010364.1"/>
</dbReference>
<dbReference type="SMR" id="B0R7G3"/>
<dbReference type="EnsemblBacteria" id="CAP14682">
    <property type="protein sequence ID" value="CAP14682"/>
    <property type="gene ID" value="OE_4177F"/>
</dbReference>
<dbReference type="KEGG" id="hsl:OE_4177F"/>
<dbReference type="HOGENOM" id="CLU_009422_4_4_2"/>
<dbReference type="PhylomeDB" id="B0R7G3"/>
<dbReference type="Proteomes" id="UP000001321">
    <property type="component" value="Chromosome"/>
</dbReference>
<dbReference type="GO" id="GO:0005737">
    <property type="term" value="C:cytoplasm"/>
    <property type="evidence" value="ECO:0007669"/>
    <property type="project" value="UniProtKB-SubCell"/>
</dbReference>
<dbReference type="GO" id="GO:0008650">
    <property type="term" value="F:rRNA (uridine-2'-O-)-methyltransferase activity"/>
    <property type="evidence" value="ECO:0007669"/>
    <property type="project" value="UniProtKB-UniRule"/>
</dbReference>
<dbReference type="Gene3D" id="2.40.50.140">
    <property type="entry name" value="Nucleic acid-binding proteins"/>
    <property type="match status" value="1"/>
</dbReference>
<dbReference type="Gene3D" id="3.40.50.150">
    <property type="entry name" value="Vaccinia Virus protein VP39"/>
    <property type="match status" value="1"/>
</dbReference>
<dbReference type="HAMAP" id="MF_01547">
    <property type="entry name" value="RNA_methyltr_E"/>
    <property type="match status" value="1"/>
</dbReference>
<dbReference type="InterPro" id="IPR012340">
    <property type="entry name" value="NA-bd_OB-fold"/>
</dbReference>
<dbReference type="InterPro" id="IPR050082">
    <property type="entry name" value="RNA_methyltr_RlmE"/>
</dbReference>
<dbReference type="InterPro" id="IPR002877">
    <property type="entry name" value="RNA_MeTrfase_FtsJ_dom"/>
</dbReference>
<dbReference type="InterPro" id="IPR015507">
    <property type="entry name" value="rRNA-MeTfrase_E"/>
</dbReference>
<dbReference type="InterPro" id="IPR029063">
    <property type="entry name" value="SAM-dependent_MTases_sf"/>
</dbReference>
<dbReference type="InterPro" id="IPR002792">
    <property type="entry name" value="TRAM_dom"/>
</dbReference>
<dbReference type="PANTHER" id="PTHR10920:SF13">
    <property type="entry name" value="PRE-RRNA 2'-O-RIBOSE RNA METHYLTRANSFERASE FTSJ3"/>
    <property type="match status" value="1"/>
</dbReference>
<dbReference type="PANTHER" id="PTHR10920">
    <property type="entry name" value="RIBOSOMAL RNA METHYLTRANSFERASE"/>
    <property type="match status" value="1"/>
</dbReference>
<dbReference type="Pfam" id="PF01728">
    <property type="entry name" value="FtsJ"/>
    <property type="match status" value="1"/>
</dbReference>
<dbReference type="Pfam" id="PF01938">
    <property type="entry name" value="TRAM"/>
    <property type="match status" value="1"/>
</dbReference>
<dbReference type="SUPFAM" id="SSF50249">
    <property type="entry name" value="Nucleic acid-binding proteins"/>
    <property type="match status" value="1"/>
</dbReference>
<dbReference type="SUPFAM" id="SSF53335">
    <property type="entry name" value="S-adenosyl-L-methionine-dependent methyltransferases"/>
    <property type="match status" value="1"/>
</dbReference>
<dbReference type="PROSITE" id="PS50926">
    <property type="entry name" value="TRAM"/>
    <property type="match status" value="1"/>
</dbReference>
<organism>
    <name type="scientific">Halobacterium salinarum (strain ATCC 29341 / DSM 671 / R1)</name>
    <dbReference type="NCBI Taxonomy" id="478009"/>
    <lineage>
        <taxon>Archaea</taxon>
        <taxon>Methanobacteriati</taxon>
        <taxon>Methanobacteriota</taxon>
        <taxon>Stenosarchaea group</taxon>
        <taxon>Halobacteria</taxon>
        <taxon>Halobacteriales</taxon>
        <taxon>Halobacteriaceae</taxon>
        <taxon>Halobacterium</taxon>
        <taxon>Halobacterium salinarum NRC-34001</taxon>
    </lineage>
</organism>
<protein>
    <recommendedName>
        <fullName evidence="1">Ribosomal RNA large subunit methyltransferase E</fullName>
        <ecNumber evidence="1">2.1.1.166</ecNumber>
    </recommendedName>
    <alternativeName>
        <fullName evidence="1">23S rRNA Um2552 methyltransferase</fullName>
    </alternativeName>
    <alternativeName>
        <fullName evidence="1">rRNA (uridine-2'-O-)-methyltransferase</fullName>
    </alternativeName>
</protein>
<gene>
    <name evidence="1" type="primary">rlmE</name>
    <name evidence="1" type="synonym">rrmJ</name>
    <name type="ordered locus">OE_4177F</name>
</gene>
<feature type="chain" id="PRO_1000195034" description="Ribosomal RNA large subunit methyltransferase E">
    <location>
        <begin position="1"/>
        <end position="259"/>
    </location>
</feature>
<feature type="domain" description="TRAM" evidence="1">
    <location>
        <begin position="199"/>
        <end position="257"/>
    </location>
</feature>
<feature type="active site" description="Proton acceptor" evidence="1">
    <location>
        <position position="152"/>
    </location>
</feature>
<feature type="binding site" evidence="1">
    <location>
        <position position="49"/>
    </location>
    <ligand>
        <name>S-adenosyl-L-methionine</name>
        <dbReference type="ChEBI" id="CHEBI:59789"/>
    </ligand>
</feature>
<feature type="binding site" evidence="1">
    <location>
        <position position="51"/>
    </location>
    <ligand>
        <name>S-adenosyl-L-methionine</name>
        <dbReference type="ChEBI" id="CHEBI:59789"/>
    </ligand>
</feature>
<feature type="binding site" evidence="1">
    <location>
        <position position="69"/>
    </location>
    <ligand>
        <name>S-adenosyl-L-methionine</name>
        <dbReference type="ChEBI" id="CHEBI:59789"/>
    </ligand>
</feature>
<feature type="binding site" evidence="1">
    <location>
        <position position="88"/>
    </location>
    <ligand>
        <name>S-adenosyl-L-methionine</name>
        <dbReference type="ChEBI" id="CHEBI:59789"/>
    </ligand>
</feature>
<feature type="binding site" evidence="1">
    <location>
        <position position="112"/>
    </location>
    <ligand>
        <name>S-adenosyl-L-methionine</name>
        <dbReference type="ChEBI" id="CHEBI:59789"/>
    </ligand>
</feature>
<evidence type="ECO:0000255" key="1">
    <source>
        <dbReference type="HAMAP-Rule" id="MF_01547"/>
    </source>
</evidence>
<accession>B0R7G3</accession>
<keyword id="KW-0963">Cytoplasm</keyword>
<keyword id="KW-0489">Methyltransferase</keyword>
<keyword id="KW-0698">rRNA processing</keyword>
<keyword id="KW-0949">S-adenosyl-L-methionine</keyword>
<keyword id="KW-0808">Transferase</keyword>
<reference key="1">
    <citation type="journal article" date="2008" name="Genomics">
        <title>Evolution in the laboratory: the genome of Halobacterium salinarum strain R1 compared to that of strain NRC-1.</title>
        <authorList>
            <person name="Pfeiffer F."/>
            <person name="Schuster S.C."/>
            <person name="Broicher A."/>
            <person name="Falb M."/>
            <person name="Palm P."/>
            <person name="Rodewald K."/>
            <person name="Ruepp A."/>
            <person name="Soppa J."/>
            <person name="Tittor J."/>
            <person name="Oesterhelt D."/>
        </authorList>
    </citation>
    <scope>NUCLEOTIDE SEQUENCE [LARGE SCALE GENOMIC DNA]</scope>
    <source>
        <strain>ATCC 29341 / DSM 671 / R1</strain>
    </source>
</reference>